<comment type="function">
    <text evidence="2">Component of the cytochrome c oxidase, the last enzyme in the mitochondrial electron transport chain which drives oxidative phosphorylation. The respiratory chain contains 3 multisubunit complexes succinate dehydrogenase (complex II, CII), ubiquinol-cytochrome c oxidoreductase (cytochrome b-c1 complex, complex III, CIII) and cytochrome c oxidase (complex IV, CIV), that cooperate to transfer electrons derived from NADH and succinate to molecular oxygen, creating an electrochemical gradient over the inner membrane that drives transmembrane transport and the ATP synthase. Cytochrome c oxidase is the component of the respiratory chain that catalyzes the reduction of oxygen to water. Electrons originating from reduced cytochrome c in the intermembrane space (IMS) are transferred via the dinuclear copper A center (CU(A)) of subunit 2 and heme A of subunit 1 to the active site in subunit 1, a binuclear center (BNC) formed by heme A3 and copper B (CU(B)). The BNC reduces molecular oxygen to 2 water molecules using 4 electrons from cytochrome c in the IMS and 4 protons from the mitochondrial matrix.</text>
</comment>
<comment type="pathway">
    <text evidence="2">Energy metabolism; oxidative phosphorylation.</text>
</comment>
<comment type="subunit">
    <text evidence="1 3">Component of the cytochrome c oxidase (complex IV, CIV), a multisubunit enzyme composed of 14 subunits. The complex is composed of a catalytic core of 3 subunits MT-CO1, MT-CO2 and MT-CO3, encoded in the mitochondrial DNA, and 11 supernumerary subunits COX4I, COX5A, COX5B, COX6A, COX6B, COX6C, COX7A, COX7B, COX7C, COX8 and NDUFA4, which are encoded in the nuclear genome. The complex exists as a monomer or a dimer and forms supercomplexes (SCs) in the inner mitochondrial membrane with NADH-ubiquinone oxidoreductase (complex I, CI) and ubiquinol-cytochrome c oxidoreductase (cytochrome b-c1 complex, complex III, CIII), resulting in different assemblies (supercomplex SCI(1)III(2)IV(1) and megacomplex MCI(2)III(2)IV(2)) (By similarity). Interacts with RAB5IF (By similarity).</text>
</comment>
<comment type="subcellular location">
    <subcellularLocation>
        <location evidence="1">Mitochondrion inner membrane</location>
        <topology evidence="1">Single-pass membrane protein</topology>
    </subcellularLocation>
</comment>
<comment type="similarity">
    <text evidence="5">Belongs to the cytochrome c oxidase VIIc family.</text>
</comment>
<evidence type="ECO:0000250" key="1">
    <source>
        <dbReference type="UniProtKB" id="P00430"/>
    </source>
</evidence>
<evidence type="ECO:0000250" key="2">
    <source>
        <dbReference type="UniProtKB" id="P04039"/>
    </source>
</evidence>
<evidence type="ECO:0000250" key="3">
    <source>
        <dbReference type="UniProtKB" id="P15954"/>
    </source>
</evidence>
<evidence type="ECO:0000256" key="4">
    <source>
        <dbReference type="SAM" id="MobiDB-lite"/>
    </source>
</evidence>
<evidence type="ECO:0000305" key="5"/>
<accession>P80334</accession>
<organism>
    <name type="scientific">Oncorhynchus mykiss</name>
    <name type="common">Rainbow trout</name>
    <name type="synonym">Salmo gairdneri</name>
    <dbReference type="NCBI Taxonomy" id="8022"/>
    <lineage>
        <taxon>Eukaryota</taxon>
        <taxon>Metazoa</taxon>
        <taxon>Chordata</taxon>
        <taxon>Craniata</taxon>
        <taxon>Vertebrata</taxon>
        <taxon>Euteleostomi</taxon>
        <taxon>Actinopterygii</taxon>
        <taxon>Neopterygii</taxon>
        <taxon>Teleostei</taxon>
        <taxon>Protacanthopterygii</taxon>
        <taxon>Salmoniformes</taxon>
        <taxon>Salmonidae</taxon>
        <taxon>Salmoninae</taxon>
        <taxon>Oncorhynchus</taxon>
    </lineage>
</organism>
<feature type="chain" id="PRO_0000197045" description="Cytochrome c oxidase polypeptide VIIc">
    <location>
        <begin position="1"/>
        <end position="25" status="greater than"/>
    </location>
</feature>
<feature type="region of interest" description="Disordered" evidence="4">
    <location>
        <begin position="1"/>
        <end position="25"/>
    </location>
</feature>
<feature type="non-terminal residue">
    <location>
        <position position="25"/>
    </location>
</feature>
<reference key="1">
    <citation type="journal article" date="1994" name="Eur. J. Biochem.">
        <title>Identification of tissue-specific isoforms for subunits Vb and VIIa of cytochrome c oxidase isolated from rainbow trout.</title>
        <authorList>
            <person name="Freund R."/>
            <person name="Kadenbach B."/>
        </authorList>
    </citation>
    <scope>PROTEIN SEQUENCE</scope>
    <source>
        <tissue>Liver</tissue>
    </source>
</reference>
<keyword id="KW-0903">Direct protein sequencing</keyword>
<keyword id="KW-0472">Membrane</keyword>
<keyword id="KW-0496">Mitochondrion</keyword>
<keyword id="KW-0999">Mitochondrion inner membrane</keyword>
<keyword id="KW-0560">Oxidoreductase</keyword>
<name>COX7C_ONCMY</name>
<dbReference type="PIR" id="S43633">
    <property type="entry name" value="S43633"/>
</dbReference>
<dbReference type="UniPathway" id="UPA00705"/>
<dbReference type="Proteomes" id="UP000694395">
    <property type="component" value="Unplaced"/>
</dbReference>
<dbReference type="GO" id="GO:0005743">
    <property type="term" value="C:mitochondrial inner membrane"/>
    <property type="evidence" value="ECO:0007669"/>
    <property type="project" value="UniProtKB-SubCell"/>
</dbReference>
<dbReference type="GO" id="GO:0045277">
    <property type="term" value="C:respiratory chain complex IV"/>
    <property type="evidence" value="ECO:0007669"/>
    <property type="project" value="InterPro"/>
</dbReference>
<dbReference type="GO" id="GO:0016491">
    <property type="term" value="F:oxidoreductase activity"/>
    <property type="evidence" value="ECO:0007669"/>
    <property type="project" value="UniProtKB-KW"/>
</dbReference>
<dbReference type="GO" id="GO:0006123">
    <property type="term" value="P:mitochondrial electron transport, cytochrome c to oxygen"/>
    <property type="evidence" value="ECO:0007669"/>
    <property type="project" value="InterPro"/>
</dbReference>
<dbReference type="Gene3D" id="4.10.49.10">
    <property type="entry name" value="Cytochrome c oxidase subunit VIIc"/>
    <property type="match status" value="1"/>
</dbReference>
<dbReference type="InterPro" id="IPR004202">
    <property type="entry name" value="COX7C/Cox8"/>
</dbReference>
<dbReference type="InterPro" id="IPR036636">
    <property type="entry name" value="COX7C/Cox8_sf"/>
</dbReference>
<dbReference type="Pfam" id="PF02935">
    <property type="entry name" value="COX7C"/>
    <property type="match status" value="1"/>
</dbReference>
<dbReference type="SUPFAM" id="SSF81427">
    <property type="entry name" value="Mitochondrial cytochrome c oxidase subunit VIIc (aka VIIIa)"/>
    <property type="match status" value="1"/>
</dbReference>
<sequence length="25" mass="2802">SHYSEGPGQNLPFSVQNKXRLLGMM</sequence>
<protein>
    <recommendedName>
        <fullName>Cytochrome c oxidase polypeptide VIIc</fullName>
    </recommendedName>
</protein>
<proteinExistence type="evidence at protein level"/>